<keyword id="KW-0328">Glycosyltransferase</keyword>
<keyword id="KW-0808">Transferase</keyword>
<name>DEOD_SALSV</name>
<dbReference type="EC" id="2.4.2.1" evidence="2"/>
<dbReference type="EMBL" id="CP001127">
    <property type="protein sequence ID" value="ACF92019.1"/>
    <property type="molecule type" value="Genomic_DNA"/>
</dbReference>
<dbReference type="RefSeq" id="WP_000224864.1">
    <property type="nucleotide sequence ID" value="NC_011094.1"/>
</dbReference>
<dbReference type="SMR" id="B4TU44"/>
<dbReference type="GeneID" id="89550598"/>
<dbReference type="KEGG" id="sew:SeSA_A4824"/>
<dbReference type="HOGENOM" id="CLU_068457_2_0_6"/>
<dbReference type="Proteomes" id="UP000001865">
    <property type="component" value="Chromosome"/>
</dbReference>
<dbReference type="GO" id="GO:0005829">
    <property type="term" value="C:cytosol"/>
    <property type="evidence" value="ECO:0007669"/>
    <property type="project" value="TreeGrafter"/>
</dbReference>
<dbReference type="GO" id="GO:0004731">
    <property type="term" value="F:purine-nucleoside phosphorylase activity"/>
    <property type="evidence" value="ECO:0007669"/>
    <property type="project" value="UniProtKB-UniRule"/>
</dbReference>
<dbReference type="GO" id="GO:0006152">
    <property type="term" value="P:purine nucleoside catabolic process"/>
    <property type="evidence" value="ECO:0007669"/>
    <property type="project" value="TreeGrafter"/>
</dbReference>
<dbReference type="CDD" id="cd09006">
    <property type="entry name" value="PNP_EcPNPI-like"/>
    <property type="match status" value="1"/>
</dbReference>
<dbReference type="FunFam" id="3.40.50.1580:FF:000002">
    <property type="entry name" value="Purine nucleoside phosphorylase DeoD-type"/>
    <property type="match status" value="1"/>
</dbReference>
<dbReference type="Gene3D" id="3.40.50.1580">
    <property type="entry name" value="Nucleoside phosphorylase domain"/>
    <property type="match status" value="1"/>
</dbReference>
<dbReference type="HAMAP" id="MF_01627">
    <property type="entry name" value="Pur_nucleosid_phosp"/>
    <property type="match status" value="1"/>
</dbReference>
<dbReference type="InterPro" id="IPR004402">
    <property type="entry name" value="DeoD-type"/>
</dbReference>
<dbReference type="InterPro" id="IPR018016">
    <property type="entry name" value="Nucleoside_phosphorylase_CS"/>
</dbReference>
<dbReference type="InterPro" id="IPR000845">
    <property type="entry name" value="Nucleoside_phosphorylase_d"/>
</dbReference>
<dbReference type="InterPro" id="IPR035994">
    <property type="entry name" value="Nucleoside_phosphorylase_sf"/>
</dbReference>
<dbReference type="NCBIfam" id="TIGR00107">
    <property type="entry name" value="deoD"/>
    <property type="match status" value="1"/>
</dbReference>
<dbReference type="NCBIfam" id="NF004489">
    <property type="entry name" value="PRK05819.1"/>
    <property type="match status" value="1"/>
</dbReference>
<dbReference type="NCBIfam" id="NF009914">
    <property type="entry name" value="PRK13374.1"/>
    <property type="match status" value="1"/>
</dbReference>
<dbReference type="PANTHER" id="PTHR43691:SF2">
    <property type="entry name" value="PURINE NUCLEOSIDE PHOSPHORYLASE DEOD-TYPE"/>
    <property type="match status" value="1"/>
</dbReference>
<dbReference type="PANTHER" id="PTHR43691">
    <property type="entry name" value="URIDINE PHOSPHORYLASE"/>
    <property type="match status" value="1"/>
</dbReference>
<dbReference type="Pfam" id="PF01048">
    <property type="entry name" value="PNP_UDP_1"/>
    <property type="match status" value="1"/>
</dbReference>
<dbReference type="SUPFAM" id="SSF53167">
    <property type="entry name" value="Purine and uridine phosphorylases"/>
    <property type="match status" value="1"/>
</dbReference>
<dbReference type="PROSITE" id="PS01232">
    <property type="entry name" value="PNP_UDP_1"/>
    <property type="match status" value="1"/>
</dbReference>
<comment type="function">
    <text evidence="2">Catalyzes the reversible phosphorolytic breakdown of the N-glycosidic bond in the beta-(deoxy)ribonucleoside molecules, with the formation of the corresponding free purine bases and pentose-1-phosphate.</text>
</comment>
<comment type="catalytic activity">
    <reaction evidence="2">
        <text>a purine D-ribonucleoside + phosphate = a purine nucleobase + alpha-D-ribose 1-phosphate</text>
        <dbReference type="Rhea" id="RHEA:19805"/>
        <dbReference type="ChEBI" id="CHEBI:26386"/>
        <dbReference type="ChEBI" id="CHEBI:43474"/>
        <dbReference type="ChEBI" id="CHEBI:57720"/>
        <dbReference type="ChEBI" id="CHEBI:142355"/>
        <dbReference type="EC" id="2.4.2.1"/>
    </reaction>
</comment>
<comment type="catalytic activity">
    <reaction evidence="2">
        <text>a purine 2'-deoxy-D-ribonucleoside + phosphate = a purine nucleobase + 2-deoxy-alpha-D-ribose 1-phosphate</text>
        <dbReference type="Rhea" id="RHEA:36431"/>
        <dbReference type="ChEBI" id="CHEBI:26386"/>
        <dbReference type="ChEBI" id="CHEBI:43474"/>
        <dbReference type="ChEBI" id="CHEBI:57259"/>
        <dbReference type="ChEBI" id="CHEBI:142361"/>
        <dbReference type="EC" id="2.4.2.1"/>
    </reaction>
</comment>
<comment type="subunit">
    <text evidence="2">Homohexamer; trimer of homodimers.</text>
</comment>
<comment type="similarity">
    <text evidence="2">Belongs to the PNP/UDP phosphorylase family.</text>
</comment>
<gene>
    <name evidence="2" type="primary">deoD</name>
    <name type="ordered locus">SeSA_A4824</name>
</gene>
<protein>
    <recommendedName>
        <fullName evidence="2">Purine nucleoside phosphorylase DeoD-type</fullName>
        <shortName evidence="2">PNP</shortName>
        <ecNumber evidence="2">2.4.2.1</ecNumber>
    </recommendedName>
</protein>
<accession>B4TU44</accession>
<organism>
    <name type="scientific">Salmonella schwarzengrund (strain CVM19633)</name>
    <dbReference type="NCBI Taxonomy" id="439843"/>
    <lineage>
        <taxon>Bacteria</taxon>
        <taxon>Pseudomonadati</taxon>
        <taxon>Pseudomonadota</taxon>
        <taxon>Gammaproteobacteria</taxon>
        <taxon>Enterobacterales</taxon>
        <taxon>Enterobacteriaceae</taxon>
        <taxon>Salmonella</taxon>
    </lineage>
</organism>
<evidence type="ECO:0000250" key="1">
    <source>
        <dbReference type="UniProtKB" id="P50389"/>
    </source>
</evidence>
<evidence type="ECO:0000255" key="2">
    <source>
        <dbReference type="HAMAP-Rule" id="MF_01627"/>
    </source>
</evidence>
<sequence length="239" mass="25979">MATPHINAEMGDFADVVLMPGDPLRAKHIAETFLEDVREVNNVRGMLGFTGTYKGRKISVMGHGMGIPSCSIYTKELITDFGVKKIIRVGSCGAVRMDVKLRDVVIGMGACTDSKVNRIRFKDHDFAAIADFDMVRNAVDAAKALGVDARVGNLFSADLFYSPDGEMFDVMEKYGVLGVEMEAAGIYGVAAEFGAKALTICTVSDHIRTHEQTTAAERQTTFNDMIKIALESVLLGDKE</sequence>
<proteinExistence type="inferred from homology"/>
<reference key="1">
    <citation type="journal article" date="2011" name="J. Bacteriol.">
        <title>Comparative genomics of 28 Salmonella enterica isolates: evidence for CRISPR-mediated adaptive sublineage evolution.</title>
        <authorList>
            <person name="Fricke W.F."/>
            <person name="Mammel M.K."/>
            <person name="McDermott P.F."/>
            <person name="Tartera C."/>
            <person name="White D.G."/>
            <person name="Leclerc J.E."/>
            <person name="Ravel J."/>
            <person name="Cebula T.A."/>
        </authorList>
    </citation>
    <scope>NUCLEOTIDE SEQUENCE [LARGE SCALE GENOMIC DNA]</scope>
    <source>
        <strain>CVM19633</strain>
    </source>
</reference>
<feature type="chain" id="PRO_1000186221" description="Purine nucleoside phosphorylase DeoD-type">
    <location>
        <begin position="1"/>
        <end position="239"/>
    </location>
</feature>
<feature type="active site" description="Proton donor" evidence="2">
    <location>
        <position position="205"/>
    </location>
</feature>
<feature type="binding site" evidence="1">
    <location>
        <position position="5"/>
    </location>
    <ligand>
        <name>a purine D-ribonucleoside</name>
        <dbReference type="ChEBI" id="CHEBI:142355"/>
        <note>ligand shared between dimeric partners</note>
    </ligand>
</feature>
<feature type="binding site" description="in other chain" evidence="1">
    <location>
        <position position="21"/>
    </location>
    <ligand>
        <name>phosphate</name>
        <dbReference type="ChEBI" id="CHEBI:43474"/>
        <note>ligand shared between dimeric partners</note>
    </ligand>
</feature>
<feature type="binding site" description="in other chain" evidence="1">
    <location>
        <position position="25"/>
    </location>
    <ligand>
        <name>phosphate</name>
        <dbReference type="ChEBI" id="CHEBI:43474"/>
        <note>ligand shared between dimeric partners</note>
    </ligand>
</feature>
<feature type="binding site" evidence="1">
    <location>
        <position position="44"/>
    </location>
    <ligand>
        <name>phosphate</name>
        <dbReference type="ChEBI" id="CHEBI:43474"/>
        <note>ligand shared between dimeric partners</note>
    </ligand>
</feature>
<feature type="binding site" description="in other chain" evidence="1">
    <location>
        <begin position="88"/>
        <end position="91"/>
    </location>
    <ligand>
        <name>phosphate</name>
        <dbReference type="ChEBI" id="CHEBI:43474"/>
        <note>ligand shared between dimeric partners</note>
    </ligand>
</feature>
<feature type="binding site" description="in other chain" evidence="1">
    <location>
        <begin position="180"/>
        <end position="182"/>
    </location>
    <ligand>
        <name>a purine D-ribonucleoside</name>
        <dbReference type="ChEBI" id="CHEBI:142355"/>
        <note>ligand shared between dimeric partners</note>
    </ligand>
</feature>
<feature type="binding site" description="in other chain" evidence="1">
    <location>
        <begin position="204"/>
        <end position="205"/>
    </location>
    <ligand>
        <name>a purine D-ribonucleoside</name>
        <dbReference type="ChEBI" id="CHEBI:142355"/>
        <note>ligand shared between dimeric partners</note>
    </ligand>
</feature>
<feature type="site" description="Important for catalytic activity" evidence="2">
    <location>
        <position position="218"/>
    </location>
</feature>